<evidence type="ECO:0000250" key="1"/>
<evidence type="ECO:0000305" key="2"/>
<evidence type="ECO:0007829" key="3">
    <source>
        <dbReference type="PDB" id="5AN9"/>
    </source>
</evidence>
<proteinExistence type="evidence at protein level"/>
<protein>
    <recommendedName>
        <fullName evidence="2">Large ribosomal subunit protein uL10</fullName>
    </recommendedName>
    <alternativeName>
        <fullName>60S acidic ribosomal protein P0</fullName>
    </alternativeName>
</protein>
<dbReference type="EMBL" id="X56194">
    <property type="protein sequence ID" value="CAA39657.1"/>
    <property type="molecule type" value="mRNA"/>
</dbReference>
<dbReference type="EMBL" id="AAFI02000087">
    <property type="protein sequence ID" value="EAL64177.1"/>
    <property type="molecule type" value="Genomic_DNA"/>
</dbReference>
<dbReference type="PIR" id="S14012">
    <property type="entry name" value="R5DOP0"/>
</dbReference>
<dbReference type="RefSeq" id="XP_637692.1">
    <property type="nucleotide sequence ID" value="XM_632600.1"/>
</dbReference>
<dbReference type="PDB" id="5AN9">
    <property type="method" value="EM"/>
    <property type="resolution" value="3.30 A"/>
    <property type="chains" value="C=1-205"/>
</dbReference>
<dbReference type="PDB" id="5ANB">
    <property type="method" value="EM"/>
    <property type="resolution" value="4.10 A"/>
    <property type="chains" value="C=1-205"/>
</dbReference>
<dbReference type="PDB" id="5ANC">
    <property type="method" value="EM"/>
    <property type="resolution" value="4.20 A"/>
    <property type="chains" value="C=1-205"/>
</dbReference>
<dbReference type="PDB" id="6QKL">
    <property type="method" value="EM"/>
    <property type="resolution" value="3.30 A"/>
    <property type="chains" value="C=1-205"/>
</dbReference>
<dbReference type="PDBsum" id="5AN9"/>
<dbReference type="PDBsum" id="5ANB"/>
<dbReference type="PDBsum" id="5ANC"/>
<dbReference type="PDBsum" id="6QKL"/>
<dbReference type="SMR" id="P22685"/>
<dbReference type="FunCoup" id="P22685">
    <property type="interactions" value="666"/>
</dbReference>
<dbReference type="STRING" id="44689.P22685"/>
<dbReference type="PaxDb" id="44689-DDB0219977"/>
<dbReference type="EnsemblProtists" id="EAL64177">
    <property type="protein sequence ID" value="EAL64177"/>
    <property type="gene ID" value="DDB_G0286501"/>
</dbReference>
<dbReference type="GeneID" id="8625658"/>
<dbReference type="KEGG" id="ddi:DDB_G0286501"/>
<dbReference type="dictyBase" id="DDB_G0286501">
    <property type="gene designation" value="rplP0"/>
</dbReference>
<dbReference type="VEuPathDB" id="AmoebaDB:DDB_G0286501"/>
<dbReference type="eggNOG" id="KOG0815">
    <property type="taxonomic scope" value="Eukaryota"/>
</dbReference>
<dbReference type="HOGENOM" id="CLU_053173_1_1_1"/>
<dbReference type="InParanoid" id="P22685"/>
<dbReference type="OMA" id="DMNPFKL"/>
<dbReference type="PhylomeDB" id="P22685"/>
<dbReference type="Reactome" id="R-DDI-156827">
    <property type="pathway name" value="L13a-mediated translational silencing of Ceruloplasmin expression"/>
</dbReference>
<dbReference type="Reactome" id="R-DDI-1799339">
    <property type="pathway name" value="SRP-dependent cotranslational protein targeting to membrane"/>
</dbReference>
<dbReference type="Reactome" id="R-DDI-72689">
    <property type="pathway name" value="Formation of a pool of free 40S subunits"/>
</dbReference>
<dbReference type="Reactome" id="R-DDI-72706">
    <property type="pathway name" value="GTP hydrolysis and joining of the 60S ribosomal subunit"/>
</dbReference>
<dbReference type="Reactome" id="R-DDI-975956">
    <property type="pathway name" value="Nonsense Mediated Decay (NMD) independent of the Exon Junction Complex (EJC)"/>
</dbReference>
<dbReference type="Reactome" id="R-DDI-975957">
    <property type="pathway name" value="Nonsense Mediated Decay (NMD) enhanced by the Exon Junction Complex (EJC)"/>
</dbReference>
<dbReference type="EvolutionaryTrace" id="P22685"/>
<dbReference type="PRO" id="PR:P22685"/>
<dbReference type="Proteomes" id="UP000002195">
    <property type="component" value="Chromosome 4"/>
</dbReference>
<dbReference type="GO" id="GO:0022625">
    <property type="term" value="C:cytosolic large ribosomal subunit"/>
    <property type="evidence" value="ECO:0000318"/>
    <property type="project" value="GO_Central"/>
</dbReference>
<dbReference type="GO" id="GO:0031012">
    <property type="term" value="C:extracellular matrix"/>
    <property type="evidence" value="ECO:0007005"/>
    <property type="project" value="dictyBase"/>
</dbReference>
<dbReference type="GO" id="GO:0005811">
    <property type="term" value="C:lipid droplet"/>
    <property type="evidence" value="ECO:0007005"/>
    <property type="project" value="dictyBase"/>
</dbReference>
<dbReference type="GO" id="GO:0045335">
    <property type="term" value="C:phagocytic vesicle"/>
    <property type="evidence" value="ECO:0007005"/>
    <property type="project" value="dictyBase"/>
</dbReference>
<dbReference type="GO" id="GO:0070180">
    <property type="term" value="F:large ribosomal subunit rRNA binding"/>
    <property type="evidence" value="ECO:0000318"/>
    <property type="project" value="GO_Central"/>
</dbReference>
<dbReference type="GO" id="GO:0003735">
    <property type="term" value="F:structural constituent of ribosome"/>
    <property type="evidence" value="ECO:0000318"/>
    <property type="project" value="GO_Central"/>
</dbReference>
<dbReference type="GO" id="GO:0002181">
    <property type="term" value="P:cytoplasmic translation"/>
    <property type="evidence" value="ECO:0000318"/>
    <property type="project" value="GO_Central"/>
</dbReference>
<dbReference type="GO" id="GO:0042254">
    <property type="term" value="P:ribosome biogenesis"/>
    <property type="evidence" value="ECO:0007669"/>
    <property type="project" value="InterPro"/>
</dbReference>
<dbReference type="CDD" id="cd05795">
    <property type="entry name" value="Ribosomal_P0_L10e"/>
    <property type="match status" value="1"/>
</dbReference>
<dbReference type="FunFam" id="3.90.105.20:FF:000001">
    <property type="entry name" value="60S acidic ribosomal protein P0"/>
    <property type="match status" value="1"/>
</dbReference>
<dbReference type="Gene3D" id="3.30.70.1730">
    <property type="match status" value="1"/>
</dbReference>
<dbReference type="Gene3D" id="3.90.105.20">
    <property type="match status" value="1"/>
</dbReference>
<dbReference type="InterPro" id="IPR050323">
    <property type="entry name" value="Ribosomal_protein_uL10"/>
</dbReference>
<dbReference type="InterPro" id="IPR001790">
    <property type="entry name" value="Ribosomal_uL10"/>
</dbReference>
<dbReference type="InterPro" id="IPR040637">
    <property type="entry name" value="Ribosomal_uL10-like_insert"/>
</dbReference>
<dbReference type="InterPro" id="IPR043164">
    <property type="entry name" value="Ribosomal_uL10-like_insert_sf"/>
</dbReference>
<dbReference type="InterPro" id="IPR043141">
    <property type="entry name" value="Ribosomal_uL10-like_sf"/>
</dbReference>
<dbReference type="InterPro" id="IPR030670">
    <property type="entry name" value="uL10_eukaryotes"/>
</dbReference>
<dbReference type="PANTHER" id="PTHR45699">
    <property type="entry name" value="60S ACIDIC RIBOSOMAL PROTEIN P0"/>
    <property type="match status" value="1"/>
</dbReference>
<dbReference type="PANTHER" id="PTHR45699:SF3">
    <property type="entry name" value="LARGE RIBOSOMAL SUBUNIT PROTEIN UL10"/>
    <property type="match status" value="1"/>
</dbReference>
<dbReference type="Pfam" id="PF00428">
    <property type="entry name" value="Ribosomal_60s"/>
    <property type="match status" value="1"/>
</dbReference>
<dbReference type="Pfam" id="PF00466">
    <property type="entry name" value="Ribosomal_L10"/>
    <property type="match status" value="1"/>
</dbReference>
<dbReference type="Pfam" id="PF17777">
    <property type="entry name" value="RL10P_insert"/>
    <property type="match status" value="1"/>
</dbReference>
<dbReference type="PIRSF" id="PIRSF039087">
    <property type="entry name" value="L10E"/>
    <property type="match status" value="1"/>
</dbReference>
<dbReference type="SUPFAM" id="SSF160369">
    <property type="entry name" value="Ribosomal protein L10-like"/>
    <property type="match status" value="1"/>
</dbReference>
<organism>
    <name type="scientific">Dictyostelium discoideum</name>
    <name type="common">Social amoeba</name>
    <dbReference type="NCBI Taxonomy" id="44689"/>
    <lineage>
        <taxon>Eukaryota</taxon>
        <taxon>Amoebozoa</taxon>
        <taxon>Evosea</taxon>
        <taxon>Eumycetozoa</taxon>
        <taxon>Dictyostelia</taxon>
        <taxon>Dictyosteliales</taxon>
        <taxon>Dictyosteliaceae</taxon>
        <taxon>Dictyostelium</taxon>
    </lineage>
</organism>
<comment type="function">
    <text>Ribosomal protein P0 is the functional equivalent of E.coli protein L10.</text>
</comment>
<comment type="subunit">
    <text>P0 forms a pentameric complex by interaction with dimers of P1 and P2.</text>
</comment>
<comment type="PTM">
    <text evidence="1">Phosphorylated.</text>
</comment>
<comment type="similarity">
    <text evidence="2">Belongs to the universal ribosomal protein uL10 family.</text>
</comment>
<accession>P22685</accession>
<accession>Q54LP0</accession>
<gene>
    <name type="primary">rplp0</name>
    <name type="ORF">DDB_G0286501</name>
</gene>
<reference key="1">
    <citation type="journal article" date="1991" name="Nucleic Acids Res.">
        <title>Nucleotide sequence of a cDNA encoding ribosomal protein P0 in Dictyostelium discoideum.</title>
        <authorList>
            <person name="Prieto J."/>
            <person name="Candel E."/>
            <person name="Coloma A."/>
        </authorList>
    </citation>
    <scope>NUCLEOTIDE SEQUENCE [MRNA]</scope>
    <source>
        <strain>AX3</strain>
    </source>
</reference>
<reference key="2">
    <citation type="journal article" date="2005" name="Nature">
        <title>The genome of the social amoeba Dictyostelium discoideum.</title>
        <authorList>
            <person name="Eichinger L."/>
            <person name="Pachebat J.A."/>
            <person name="Gloeckner G."/>
            <person name="Rajandream M.A."/>
            <person name="Sucgang R."/>
            <person name="Berriman M."/>
            <person name="Song J."/>
            <person name="Olsen R."/>
            <person name="Szafranski K."/>
            <person name="Xu Q."/>
            <person name="Tunggal B."/>
            <person name="Kummerfeld S."/>
            <person name="Madera M."/>
            <person name="Konfortov B.A."/>
            <person name="Rivero F."/>
            <person name="Bankier A.T."/>
            <person name="Lehmann R."/>
            <person name="Hamlin N."/>
            <person name="Davies R."/>
            <person name="Gaudet P."/>
            <person name="Fey P."/>
            <person name="Pilcher K."/>
            <person name="Chen G."/>
            <person name="Saunders D."/>
            <person name="Sodergren E.J."/>
            <person name="Davis P."/>
            <person name="Kerhornou A."/>
            <person name="Nie X."/>
            <person name="Hall N."/>
            <person name="Anjard C."/>
            <person name="Hemphill L."/>
            <person name="Bason N."/>
            <person name="Farbrother P."/>
            <person name="Desany B."/>
            <person name="Just E."/>
            <person name="Morio T."/>
            <person name="Rost R."/>
            <person name="Churcher C.M."/>
            <person name="Cooper J."/>
            <person name="Haydock S."/>
            <person name="van Driessche N."/>
            <person name="Cronin A."/>
            <person name="Goodhead I."/>
            <person name="Muzny D.M."/>
            <person name="Mourier T."/>
            <person name="Pain A."/>
            <person name="Lu M."/>
            <person name="Harper D."/>
            <person name="Lindsay R."/>
            <person name="Hauser H."/>
            <person name="James K.D."/>
            <person name="Quiles M."/>
            <person name="Madan Babu M."/>
            <person name="Saito T."/>
            <person name="Buchrieser C."/>
            <person name="Wardroper A."/>
            <person name="Felder M."/>
            <person name="Thangavelu M."/>
            <person name="Johnson D."/>
            <person name="Knights A."/>
            <person name="Loulseged H."/>
            <person name="Mungall K.L."/>
            <person name="Oliver K."/>
            <person name="Price C."/>
            <person name="Quail M.A."/>
            <person name="Urushihara H."/>
            <person name="Hernandez J."/>
            <person name="Rabbinowitsch E."/>
            <person name="Steffen D."/>
            <person name="Sanders M."/>
            <person name="Ma J."/>
            <person name="Kohara Y."/>
            <person name="Sharp S."/>
            <person name="Simmonds M.N."/>
            <person name="Spiegler S."/>
            <person name="Tivey A."/>
            <person name="Sugano S."/>
            <person name="White B."/>
            <person name="Walker D."/>
            <person name="Woodward J.R."/>
            <person name="Winckler T."/>
            <person name="Tanaka Y."/>
            <person name="Shaulsky G."/>
            <person name="Schleicher M."/>
            <person name="Weinstock G.M."/>
            <person name="Rosenthal A."/>
            <person name="Cox E.C."/>
            <person name="Chisholm R.L."/>
            <person name="Gibbs R.A."/>
            <person name="Loomis W.F."/>
            <person name="Platzer M."/>
            <person name="Kay R.R."/>
            <person name="Williams J.G."/>
            <person name="Dear P.H."/>
            <person name="Noegel A.A."/>
            <person name="Barrell B.G."/>
            <person name="Kuspa A."/>
        </authorList>
    </citation>
    <scope>NUCLEOTIDE SEQUENCE [LARGE SCALE GENOMIC DNA]</scope>
    <source>
        <strain>AX4</strain>
    </source>
</reference>
<reference key="3">
    <citation type="journal article" date="2006" name="Mol. Cell. Proteomics">
        <title>Proteomics fingerprinting of phagosome maturation and evidence for the role of a Galpha during uptake.</title>
        <authorList>
            <person name="Gotthardt D."/>
            <person name="Blancheteau V."/>
            <person name="Bosserhoff A."/>
            <person name="Ruppert T."/>
            <person name="Delorenzi M."/>
            <person name="Soldati T."/>
        </authorList>
    </citation>
    <scope>IDENTIFICATION BY MASS SPECTROMETRY [LARGE SCALE ANALYSIS]</scope>
    <source>
        <strain>AX2</strain>
    </source>
</reference>
<sequence>MSGAGSKRKNVFIEKATKLFTTYDKMIVAEADFVGSSQLQKIRKSIRGIGAVLMGKKTMIRKVIRDLADSKPELDALNTYLKQNTCIIFCKDNIAEVKRVINTQRVGAPAKAGVFAPNDVIIPAGPTGMEPTQTSFLQDLKIATKINRGQIDIVNEVHIIKTGQKVGASEATLLQKLNIKPFTYGLEPKIIYDAGACYSPSISEEDLINKFKQGIFNIAAISLEIGYPTVASIPHSVMNAFKNLLAISFETSYTFDAAEKFKSAAAAAPVAAAPSAAAPAAAAKKVVVEEKKEESDDDMGMGLFD</sequence>
<keyword id="KW-0002">3D-structure</keyword>
<keyword id="KW-0597">Phosphoprotein</keyword>
<keyword id="KW-1185">Reference proteome</keyword>
<keyword id="KW-0687">Ribonucleoprotein</keyword>
<keyword id="KW-0689">Ribosomal protein</keyword>
<feature type="chain" id="PRO_0000154768" description="Large ribosomal subunit protein uL10">
    <location>
        <begin position="1"/>
        <end position="305"/>
    </location>
</feature>
<feature type="sequence conflict" description="In Ref. 1; CAA39657." evidence="2" ref="1">
    <original>NV</original>
    <variation>KL</variation>
    <location>
        <begin position="10"/>
        <end position="11"/>
    </location>
</feature>
<feature type="sequence conflict" description="In Ref. 1; CAA39657." evidence="2" ref="1">
    <original>A</original>
    <variation>R</variation>
    <location>
        <position position="271"/>
    </location>
</feature>
<feature type="sequence conflict" description="In Ref. 1; CAA39657." evidence="2" ref="1">
    <original>A</original>
    <variation>R</variation>
    <location>
        <position position="280"/>
    </location>
</feature>
<feature type="turn" evidence="3">
    <location>
        <begin position="5"/>
        <end position="8"/>
    </location>
</feature>
<feature type="helix" evidence="3">
    <location>
        <begin position="9"/>
        <end position="18"/>
    </location>
</feature>
<feature type="strand" evidence="3">
    <location>
        <begin position="24"/>
        <end position="30"/>
    </location>
</feature>
<feature type="helix" evidence="3">
    <location>
        <begin position="39"/>
        <end position="41"/>
    </location>
</feature>
<feature type="turn" evidence="3">
    <location>
        <begin position="42"/>
        <end position="44"/>
    </location>
</feature>
<feature type="helix" evidence="3">
    <location>
        <begin position="45"/>
        <end position="49"/>
    </location>
</feature>
<feature type="strand" evidence="3">
    <location>
        <begin position="50"/>
        <end position="52"/>
    </location>
</feature>
<feature type="helix" evidence="3">
    <location>
        <begin position="65"/>
        <end position="67"/>
    </location>
</feature>
<feature type="strand" evidence="3">
    <location>
        <begin position="73"/>
        <end position="78"/>
    </location>
</feature>
<feature type="strand" evidence="3">
    <location>
        <begin position="80"/>
        <end position="83"/>
    </location>
</feature>
<feature type="strand" evidence="3">
    <location>
        <begin position="85"/>
        <end position="92"/>
    </location>
</feature>
<feature type="turn" evidence="3">
    <location>
        <begin position="96"/>
        <end position="99"/>
    </location>
</feature>
<feature type="helix" evidence="3">
    <location>
        <begin position="100"/>
        <end position="103"/>
    </location>
</feature>
<feature type="helix" evidence="3">
    <location>
        <begin position="125"/>
        <end position="128"/>
    </location>
</feature>
<feature type="helix" evidence="3">
    <location>
        <begin position="134"/>
        <end position="139"/>
    </location>
</feature>
<feature type="strand" evidence="3">
    <location>
        <begin position="140"/>
        <end position="142"/>
    </location>
</feature>
<feature type="strand" evidence="3">
    <location>
        <begin position="148"/>
        <end position="152"/>
    </location>
</feature>
<feature type="helix" evidence="3">
    <location>
        <begin position="168"/>
        <end position="176"/>
    </location>
</feature>
<feature type="strand" evidence="3">
    <location>
        <begin position="183"/>
        <end position="192"/>
    </location>
</feature>
<feature type="strand" evidence="3">
    <location>
        <begin position="194"/>
        <end position="196"/>
    </location>
</feature>
<name>RLA0_DICDI</name>